<feature type="chain" id="PRO_0000135699" description="Transmembrane protein 91">
    <location>
        <begin position="1"/>
        <end position="172"/>
    </location>
</feature>
<feature type="topological domain" description="Extracellular" evidence="1">
    <location>
        <begin position="1"/>
        <end position="97"/>
    </location>
</feature>
<feature type="transmembrane region" description="Helical" evidence="1">
    <location>
        <begin position="98"/>
        <end position="118"/>
    </location>
</feature>
<feature type="topological domain" description="Cytoplasmic" evidence="1">
    <location>
        <begin position="119"/>
        <end position="139"/>
    </location>
</feature>
<feature type="transmembrane region" description="Helical" evidence="1">
    <location>
        <begin position="140"/>
        <end position="160"/>
    </location>
</feature>
<feature type="topological domain" description="Extracellular" evidence="1">
    <location>
        <begin position="161"/>
        <end position="172"/>
    </location>
</feature>
<feature type="region of interest" description="Disordered" evidence="2">
    <location>
        <begin position="1"/>
        <end position="31"/>
    </location>
</feature>
<feature type="region of interest" description="Disordered" evidence="2">
    <location>
        <begin position="55"/>
        <end position="83"/>
    </location>
</feature>
<feature type="compositionally biased region" description="Acidic residues" evidence="2">
    <location>
        <begin position="69"/>
        <end position="81"/>
    </location>
</feature>
<feature type="splice variant" id="VSP_042819" description="In isoform 2." evidence="3">
    <original>TNKAWAKGDIQGAGAASRRAFLLGVLAVGLGVCTYAAALVTLAAYLASRDPP</original>
    <variation>HPQCLTYSRCYVSAFGIHA</variation>
    <location>
        <begin position="121"/>
        <end position="172"/>
    </location>
</feature>
<feature type="splice variant" id="VSP_045717" description="In isoform 3." evidence="3">
    <original>TNKAWAKGDIQGAGAASRRAFLLGVLAVGLGVCTYAAALVTLAAYLASRDPP</original>
    <variation>LPLQPSL</variation>
    <location>
        <begin position="121"/>
        <end position="172"/>
    </location>
</feature>
<feature type="splice variant" id="VSP_047211" description="In isoform 4." evidence="4">
    <original>TNKAWAKGDIQGAGAASRRAFLLGVLAVGLGVCTYAAALVTLAAYLASRDPP</original>
    <variation>PSL</variation>
    <location>
        <begin position="121"/>
        <end position="172"/>
    </location>
</feature>
<feature type="splice variant" id="VSP_047212" description="In isoform 5." evidence="5">
    <original>NKAWAKGDIQGAGAASRRAFLLGVLAVGLGVCTYAAALVTLAAYLASRDP</original>
    <variation>RPSCPYSPHCE</variation>
    <location>
        <begin position="122"/>
        <end position="171"/>
    </location>
</feature>
<feature type="sequence conflict" description="In Ref. 2; BX090160." evidence="6" ref="2">
    <original>M</original>
    <variation>L</variation>
    <location>
        <position position="1"/>
    </location>
</feature>
<feature type="sequence conflict" description="In Ref. 1; BM931402." evidence="6" ref="1">
    <original>A</original>
    <variation>G</variation>
    <location>
        <position position="114"/>
    </location>
</feature>
<keyword id="KW-0025">Alternative splicing</keyword>
<keyword id="KW-0472">Membrane</keyword>
<keyword id="KW-1185">Reference proteome</keyword>
<keyword id="KW-0812">Transmembrane</keyword>
<keyword id="KW-1133">Transmembrane helix</keyword>
<proteinExistence type="evidence at protein level"/>
<reference key="1">
    <citation type="journal article" date="1996" name="Genome Res.">
        <title>Normalization and subtraction: two approaches to facilitate gene discovery.</title>
        <authorList>
            <person name="Bonaldo M.F."/>
            <person name="Lennon G."/>
            <person name="Soares M.B."/>
        </authorList>
    </citation>
    <scope>NUCLEOTIDE SEQUENCE [LARGE SCALE MRNA] (ISOFORM 4)</scope>
</reference>
<reference key="2">
    <citation type="submission" date="2002-12" db="EMBL/GenBank/DDBJ databases">
        <authorList>
            <person name="Ebert L."/>
            <person name="Heil O."/>
            <person name="Hennig S."/>
            <person name="Neubert P."/>
            <person name="Partsch E."/>
            <person name="Peters M."/>
            <person name="Radelof U."/>
            <person name="Schneider D."/>
            <person name="Korn B."/>
        </authorList>
    </citation>
    <scope>NUCLEOTIDE SEQUENCE [LARGE SCALE MRNA] (ISOFORM 5)</scope>
</reference>
<reference key="3">
    <citation type="journal article" date="2004" name="Nat. Genet.">
        <title>Complete sequencing and characterization of 21,243 full-length human cDNAs.</title>
        <authorList>
            <person name="Ota T."/>
            <person name="Suzuki Y."/>
            <person name="Nishikawa T."/>
            <person name="Otsuki T."/>
            <person name="Sugiyama T."/>
            <person name="Irie R."/>
            <person name="Wakamatsu A."/>
            <person name="Hayashi K."/>
            <person name="Sato H."/>
            <person name="Nagai K."/>
            <person name="Kimura K."/>
            <person name="Makita H."/>
            <person name="Sekine M."/>
            <person name="Obayashi M."/>
            <person name="Nishi T."/>
            <person name="Shibahara T."/>
            <person name="Tanaka T."/>
            <person name="Ishii S."/>
            <person name="Yamamoto J."/>
            <person name="Saito K."/>
            <person name="Kawai Y."/>
            <person name="Isono Y."/>
            <person name="Nakamura Y."/>
            <person name="Nagahari K."/>
            <person name="Murakami K."/>
            <person name="Yasuda T."/>
            <person name="Iwayanagi T."/>
            <person name="Wagatsuma M."/>
            <person name="Shiratori A."/>
            <person name="Sudo H."/>
            <person name="Hosoiri T."/>
            <person name="Kaku Y."/>
            <person name="Kodaira H."/>
            <person name="Kondo H."/>
            <person name="Sugawara M."/>
            <person name="Takahashi M."/>
            <person name="Kanda K."/>
            <person name="Yokoi T."/>
            <person name="Furuya T."/>
            <person name="Kikkawa E."/>
            <person name="Omura Y."/>
            <person name="Abe K."/>
            <person name="Kamihara K."/>
            <person name="Katsuta N."/>
            <person name="Sato K."/>
            <person name="Tanikawa M."/>
            <person name="Yamazaki M."/>
            <person name="Ninomiya K."/>
            <person name="Ishibashi T."/>
            <person name="Yamashita H."/>
            <person name="Murakawa K."/>
            <person name="Fujimori K."/>
            <person name="Tanai H."/>
            <person name="Kimata M."/>
            <person name="Watanabe M."/>
            <person name="Hiraoka S."/>
            <person name="Chiba Y."/>
            <person name="Ishida S."/>
            <person name="Ono Y."/>
            <person name="Takiguchi S."/>
            <person name="Watanabe S."/>
            <person name="Yosida M."/>
            <person name="Hotuta T."/>
            <person name="Kusano J."/>
            <person name="Kanehori K."/>
            <person name="Takahashi-Fujii A."/>
            <person name="Hara H."/>
            <person name="Tanase T.-O."/>
            <person name="Nomura Y."/>
            <person name="Togiya S."/>
            <person name="Komai F."/>
            <person name="Hara R."/>
            <person name="Takeuchi K."/>
            <person name="Arita M."/>
            <person name="Imose N."/>
            <person name="Musashino K."/>
            <person name="Yuuki H."/>
            <person name="Oshima A."/>
            <person name="Sasaki N."/>
            <person name="Aotsuka S."/>
            <person name="Yoshikawa Y."/>
            <person name="Matsunawa H."/>
            <person name="Ichihara T."/>
            <person name="Shiohata N."/>
            <person name="Sano S."/>
            <person name="Moriya S."/>
            <person name="Momiyama H."/>
            <person name="Satoh N."/>
            <person name="Takami S."/>
            <person name="Terashima Y."/>
            <person name="Suzuki O."/>
            <person name="Nakagawa S."/>
            <person name="Senoh A."/>
            <person name="Mizoguchi H."/>
            <person name="Goto Y."/>
            <person name="Shimizu F."/>
            <person name="Wakebe H."/>
            <person name="Hishigaki H."/>
            <person name="Watanabe T."/>
            <person name="Sugiyama A."/>
            <person name="Takemoto M."/>
            <person name="Kawakami B."/>
            <person name="Yamazaki M."/>
            <person name="Watanabe K."/>
            <person name="Kumagai A."/>
            <person name="Itakura S."/>
            <person name="Fukuzumi Y."/>
            <person name="Fujimori Y."/>
            <person name="Komiyama M."/>
            <person name="Tashiro H."/>
            <person name="Tanigami A."/>
            <person name="Fujiwara T."/>
            <person name="Ono T."/>
            <person name="Yamada K."/>
            <person name="Fujii Y."/>
            <person name="Ozaki K."/>
            <person name="Hirao M."/>
            <person name="Ohmori Y."/>
            <person name="Kawabata A."/>
            <person name="Hikiji T."/>
            <person name="Kobatake N."/>
            <person name="Inagaki H."/>
            <person name="Ikema Y."/>
            <person name="Okamoto S."/>
            <person name="Okitani R."/>
            <person name="Kawakami T."/>
            <person name="Noguchi S."/>
            <person name="Itoh T."/>
            <person name="Shigeta K."/>
            <person name="Senba T."/>
            <person name="Matsumura K."/>
            <person name="Nakajima Y."/>
            <person name="Mizuno T."/>
            <person name="Morinaga M."/>
            <person name="Sasaki M."/>
            <person name="Togashi T."/>
            <person name="Oyama M."/>
            <person name="Hata H."/>
            <person name="Watanabe M."/>
            <person name="Komatsu T."/>
            <person name="Mizushima-Sugano J."/>
            <person name="Satoh T."/>
            <person name="Shirai Y."/>
            <person name="Takahashi Y."/>
            <person name="Nakagawa K."/>
            <person name="Okumura K."/>
            <person name="Nagase T."/>
            <person name="Nomura N."/>
            <person name="Kikuchi H."/>
            <person name="Masuho Y."/>
            <person name="Yamashita R."/>
            <person name="Nakai K."/>
            <person name="Yada T."/>
            <person name="Nakamura Y."/>
            <person name="Ohara O."/>
            <person name="Isogai T."/>
            <person name="Sugano S."/>
        </authorList>
    </citation>
    <scope>NUCLEOTIDE SEQUENCE [LARGE SCALE MRNA] (ISOFORM 1)</scope>
    <source>
        <tissue>Thymus</tissue>
    </source>
</reference>
<reference key="4">
    <citation type="journal article" date="2004" name="Nature">
        <title>The DNA sequence and biology of human chromosome 19.</title>
        <authorList>
            <person name="Grimwood J."/>
            <person name="Gordon L.A."/>
            <person name="Olsen A.S."/>
            <person name="Terry A."/>
            <person name="Schmutz J."/>
            <person name="Lamerdin J.E."/>
            <person name="Hellsten U."/>
            <person name="Goodstein D."/>
            <person name="Couronne O."/>
            <person name="Tran-Gyamfi M."/>
            <person name="Aerts A."/>
            <person name="Altherr M."/>
            <person name="Ashworth L."/>
            <person name="Bajorek E."/>
            <person name="Black S."/>
            <person name="Branscomb E."/>
            <person name="Caenepeel S."/>
            <person name="Carrano A.V."/>
            <person name="Caoile C."/>
            <person name="Chan Y.M."/>
            <person name="Christensen M."/>
            <person name="Cleland C.A."/>
            <person name="Copeland A."/>
            <person name="Dalin E."/>
            <person name="Dehal P."/>
            <person name="Denys M."/>
            <person name="Detter J.C."/>
            <person name="Escobar J."/>
            <person name="Flowers D."/>
            <person name="Fotopulos D."/>
            <person name="Garcia C."/>
            <person name="Georgescu A.M."/>
            <person name="Glavina T."/>
            <person name="Gomez M."/>
            <person name="Gonzales E."/>
            <person name="Groza M."/>
            <person name="Hammon N."/>
            <person name="Hawkins T."/>
            <person name="Haydu L."/>
            <person name="Ho I."/>
            <person name="Huang W."/>
            <person name="Israni S."/>
            <person name="Jett J."/>
            <person name="Kadner K."/>
            <person name="Kimball H."/>
            <person name="Kobayashi A."/>
            <person name="Larionov V."/>
            <person name="Leem S.-H."/>
            <person name="Lopez F."/>
            <person name="Lou Y."/>
            <person name="Lowry S."/>
            <person name="Malfatti S."/>
            <person name="Martinez D."/>
            <person name="McCready P.M."/>
            <person name="Medina C."/>
            <person name="Morgan J."/>
            <person name="Nelson K."/>
            <person name="Nolan M."/>
            <person name="Ovcharenko I."/>
            <person name="Pitluck S."/>
            <person name="Pollard M."/>
            <person name="Popkie A.P."/>
            <person name="Predki P."/>
            <person name="Quan G."/>
            <person name="Ramirez L."/>
            <person name="Rash S."/>
            <person name="Retterer J."/>
            <person name="Rodriguez A."/>
            <person name="Rogers S."/>
            <person name="Salamov A."/>
            <person name="Salazar A."/>
            <person name="She X."/>
            <person name="Smith D."/>
            <person name="Slezak T."/>
            <person name="Solovyev V."/>
            <person name="Thayer N."/>
            <person name="Tice H."/>
            <person name="Tsai M."/>
            <person name="Ustaszewska A."/>
            <person name="Vo N."/>
            <person name="Wagner M."/>
            <person name="Wheeler J."/>
            <person name="Wu K."/>
            <person name="Xie G."/>
            <person name="Yang J."/>
            <person name="Dubchak I."/>
            <person name="Furey T.S."/>
            <person name="DeJong P."/>
            <person name="Dickson M."/>
            <person name="Gordon D."/>
            <person name="Eichler E.E."/>
            <person name="Pennacchio L.A."/>
            <person name="Richardson P."/>
            <person name="Stubbs L."/>
            <person name="Rokhsar D.S."/>
            <person name="Myers R.M."/>
            <person name="Rubin E.M."/>
            <person name="Lucas S.M."/>
        </authorList>
    </citation>
    <scope>NUCLEOTIDE SEQUENCE [LARGE SCALE GENOMIC DNA]</scope>
</reference>
<reference key="5">
    <citation type="submission" date="2005-07" db="EMBL/GenBank/DDBJ databases">
        <authorList>
            <person name="Mural R.J."/>
            <person name="Istrail S."/>
            <person name="Sutton G."/>
            <person name="Florea L."/>
            <person name="Halpern A.L."/>
            <person name="Mobarry C.M."/>
            <person name="Lippert R."/>
            <person name="Walenz B."/>
            <person name="Shatkay H."/>
            <person name="Dew I."/>
            <person name="Miller J.R."/>
            <person name="Flanigan M.J."/>
            <person name="Edwards N.J."/>
            <person name="Bolanos R."/>
            <person name="Fasulo D."/>
            <person name="Halldorsson B.V."/>
            <person name="Hannenhalli S."/>
            <person name="Turner R."/>
            <person name="Yooseph S."/>
            <person name="Lu F."/>
            <person name="Nusskern D.R."/>
            <person name="Shue B.C."/>
            <person name="Zheng X.H."/>
            <person name="Zhong F."/>
            <person name="Delcher A.L."/>
            <person name="Huson D.H."/>
            <person name="Kravitz S.A."/>
            <person name="Mouchard L."/>
            <person name="Reinert K."/>
            <person name="Remington K.A."/>
            <person name="Clark A.G."/>
            <person name="Waterman M.S."/>
            <person name="Eichler E.E."/>
            <person name="Adams M.D."/>
            <person name="Hunkapiller M.W."/>
            <person name="Myers E.W."/>
            <person name="Venter J.C."/>
        </authorList>
    </citation>
    <scope>NUCLEOTIDE SEQUENCE [LARGE SCALE GENOMIC DNA]</scope>
</reference>
<reference key="6">
    <citation type="journal article" date="2004" name="Genome Res.">
        <title>The status, quality, and expansion of the NIH full-length cDNA project: the Mammalian Gene Collection (MGC).</title>
        <authorList>
            <consortium name="The MGC Project Team"/>
        </authorList>
    </citation>
    <scope>NUCLEOTIDE SEQUENCE [LARGE SCALE MRNA] (ISOFORMS 2 AND 3)</scope>
    <source>
        <tissue>Leiomyosarcoma</tissue>
        <tissue>Skin</tissue>
    </source>
</reference>
<reference key="7">
    <citation type="journal article" date="2012" name="PLoS ONE">
        <title>The dispanins: a novel gene family of ancient origin that contains 14 human members.</title>
        <authorList>
            <person name="Sallman Almen M."/>
            <person name="Bringeland N."/>
            <person name="Fredriksson R."/>
            <person name="Schioth H.B."/>
        </authorList>
    </citation>
    <scope>GENE FAMILY</scope>
</reference>
<accession>Q6ZNR0</accession>
<accession>C9J9D1</accession>
<accession>C9JZ62</accession>
<accession>C9K046</accession>
<accession>Q6P434</accession>
<organism>
    <name type="scientific">Homo sapiens</name>
    <name type="common">Human</name>
    <dbReference type="NCBI Taxonomy" id="9606"/>
    <lineage>
        <taxon>Eukaryota</taxon>
        <taxon>Metazoa</taxon>
        <taxon>Chordata</taxon>
        <taxon>Craniata</taxon>
        <taxon>Vertebrata</taxon>
        <taxon>Euteleostomi</taxon>
        <taxon>Mammalia</taxon>
        <taxon>Eutheria</taxon>
        <taxon>Euarchontoglires</taxon>
        <taxon>Primates</taxon>
        <taxon>Haplorrhini</taxon>
        <taxon>Catarrhini</taxon>
        <taxon>Hominidae</taxon>
        <taxon>Homo</taxon>
    </lineage>
</organism>
<name>TMM91_HUMAN</name>
<protein>
    <recommendedName>
        <fullName>Transmembrane protein 91</fullName>
    </recommendedName>
    <alternativeName>
        <fullName>Dispanin subfamily C member 3</fullName>
        <shortName>DSPC3</shortName>
    </alternativeName>
</protein>
<comment type="interaction">
    <interactant intactId="EBI-13345425">
        <id>Q6ZNR0-2</id>
    </interactant>
    <interactant intactId="EBI-12237619">
        <id>O75841</id>
        <label>UPK1B</label>
    </interactant>
    <organismsDiffer>false</organismsDiffer>
    <experiments>3</experiments>
</comment>
<comment type="subcellular location">
    <subcellularLocation>
        <location evidence="6">Membrane</location>
        <topology evidence="6">Multi-pass membrane protein</topology>
    </subcellularLocation>
</comment>
<comment type="alternative products">
    <event type="alternative splicing"/>
    <isoform>
        <id>Q6ZNR0-1</id>
        <name>1</name>
        <sequence type="displayed"/>
    </isoform>
    <isoform>
        <id>Q6ZNR0-2</id>
        <name>2</name>
        <sequence type="described" ref="VSP_042819"/>
    </isoform>
    <isoform>
        <id>Q6ZNR0-3</id>
        <name>3</name>
        <sequence type="described" ref="VSP_045717"/>
    </isoform>
    <isoform>
        <id>Q6ZNR0-4</id>
        <name>4</name>
        <sequence type="described" ref="VSP_047211"/>
    </isoform>
    <isoform>
        <id>Q6ZNR0-5</id>
        <name>5</name>
        <sequence type="described" ref="VSP_047212"/>
    </isoform>
</comment>
<comment type="similarity">
    <text evidence="6">Belongs to the CD225/Dispanin family.</text>
</comment>
<comment type="sequence caution" evidence="6">
    <conflict type="frameshift">
        <sequence resource="EMBL" id="BM931402"/>
    </conflict>
</comment>
<gene>
    <name type="primary">TMEM91</name>
</gene>
<evidence type="ECO:0000255" key="1"/>
<evidence type="ECO:0000256" key="2">
    <source>
        <dbReference type="SAM" id="MobiDB-lite"/>
    </source>
</evidence>
<evidence type="ECO:0000303" key="3">
    <source>
    </source>
</evidence>
<evidence type="ECO:0000303" key="4">
    <source>
    </source>
</evidence>
<evidence type="ECO:0000303" key="5">
    <source ref="2"/>
</evidence>
<evidence type="ECO:0000305" key="6"/>
<sequence length="172" mass="18162">MDSPSLRELQQPLLEGTECETPAQKPGRHELGSPLREIAFAESLRGLQFLSPPLPSVSAGLGEPRPPDVEDMSSSDSDSDWDGGSRLSPFLPHDHLGLAVFSMLCCFWPVGIAAFCLAQKTNKAWAKGDIQGAGAASRRAFLLGVLAVGLGVCTYAAALVTLAAYLASRDPP</sequence>
<dbReference type="EMBL" id="BM931402">
    <property type="status" value="NOT_ANNOTATED_CDS"/>
    <property type="molecule type" value="mRNA"/>
</dbReference>
<dbReference type="EMBL" id="BX090160">
    <property type="status" value="NOT_ANNOTATED_CDS"/>
    <property type="molecule type" value="mRNA"/>
</dbReference>
<dbReference type="EMBL" id="AK130820">
    <property type="protein sequence ID" value="BAC85439.1"/>
    <property type="molecule type" value="mRNA"/>
</dbReference>
<dbReference type="EMBL" id="AC011462">
    <property type="status" value="NOT_ANNOTATED_CDS"/>
    <property type="molecule type" value="Genomic_DNA"/>
</dbReference>
<dbReference type="EMBL" id="CH471126">
    <property type="protein sequence ID" value="EAW57037.1"/>
    <property type="molecule type" value="Genomic_DNA"/>
</dbReference>
<dbReference type="EMBL" id="BC063705">
    <property type="protein sequence ID" value="AAH63705.1"/>
    <property type="molecule type" value="mRNA"/>
</dbReference>
<dbReference type="EMBL" id="BF684543">
    <property type="status" value="NOT_ANNOTATED_CDS"/>
    <property type="molecule type" value="mRNA"/>
</dbReference>
<dbReference type="CCDS" id="CCDS42571.1">
    <molecule id="Q6ZNR0-1"/>
</dbReference>
<dbReference type="CCDS" id="CCDS42572.1">
    <molecule id="Q6ZNR0-2"/>
</dbReference>
<dbReference type="CCDS" id="CCDS46082.1">
    <molecule id="Q6ZNR0-5"/>
</dbReference>
<dbReference type="CCDS" id="CCDS46083.1">
    <molecule id="Q6ZNR0-3"/>
</dbReference>
<dbReference type="CCDS" id="CCDS46084.1">
    <molecule id="Q6ZNR0-4"/>
</dbReference>
<dbReference type="RefSeq" id="NP_001036060.1">
    <molecule id="Q6ZNR0-2"/>
    <property type="nucleotide sequence ID" value="NM_001042595.3"/>
</dbReference>
<dbReference type="RefSeq" id="NP_001092291.1">
    <molecule id="Q6ZNR0-1"/>
    <property type="nucleotide sequence ID" value="NM_001098821.2"/>
</dbReference>
<dbReference type="RefSeq" id="NP_001092292.1">
    <molecule id="Q6ZNR0-5"/>
    <property type="nucleotide sequence ID" value="NM_001098822.2"/>
</dbReference>
<dbReference type="RefSeq" id="NP_001092293.1">
    <molecule id="Q6ZNR0-3"/>
    <property type="nucleotide sequence ID" value="NM_001098823.2"/>
</dbReference>
<dbReference type="RefSeq" id="NP_001092294.1">
    <molecule id="Q6ZNR0-4"/>
    <property type="nucleotide sequence ID" value="NM_001098824.2"/>
</dbReference>
<dbReference type="RefSeq" id="NP_001092295.1">
    <molecule id="Q6ZNR0-5"/>
    <property type="nucleotide sequence ID" value="NM_001098825.2"/>
</dbReference>
<dbReference type="RefSeq" id="NP_001356791.1">
    <molecule id="Q6ZNR0-2"/>
    <property type="nucleotide sequence ID" value="NM_001369862.1"/>
</dbReference>
<dbReference type="RefSeq" id="NP_001356793.1">
    <molecule id="Q6ZNR0-5"/>
    <property type="nucleotide sequence ID" value="NM_001369864.1"/>
</dbReference>
<dbReference type="SMR" id="Q6ZNR0"/>
<dbReference type="BioGRID" id="535010">
    <property type="interactions" value="2"/>
</dbReference>
<dbReference type="FunCoup" id="Q6ZNR0">
    <property type="interactions" value="23"/>
</dbReference>
<dbReference type="IntAct" id="Q6ZNR0">
    <property type="interactions" value="1"/>
</dbReference>
<dbReference type="STRING" id="9606.ENSP00000375859"/>
<dbReference type="TCDB" id="8.A.58.2.3">
    <property type="family name" value="the dispanin (dispanin) family"/>
</dbReference>
<dbReference type="iPTMnet" id="Q6ZNR0"/>
<dbReference type="PhosphoSitePlus" id="Q6ZNR0"/>
<dbReference type="BioMuta" id="TMEM91"/>
<dbReference type="DMDM" id="55976711"/>
<dbReference type="MassIVE" id="Q6ZNR0"/>
<dbReference type="PaxDb" id="9606-ENSP00000375859"/>
<dbReference type="PeptideAtlas" id="Q6ZNR0"/>
<dbReference type="Antibodypedia" id="35353">
    <property type="antibodies" value="74 antibodies from 14 providers"/>
</dbReference>
<dbReference type="DNASU" id="641649"/>
<dbReference type="Ensembl" id="ENST00000356385.8">
    <molecule id="Q6ZNR0-2"/>
    <property type="protein sequence ID" value="ENSP00000348750.4"/>
    <property type="gene ID" value="ENSG00000142046.15"/>
</dbReference>
<dbReference type="Ensembl" id="ENST00000392002.7">
    <molecule id="Q6ZNR0-1"/>
    <property type="protein sequence ID" value="ENSP00000375859.1"/>
    <property type="gene ID" value="ENSG00000142046.15"/>
</dbReference>
<dbReference type="Ensembl" id="ENST00000413014.6">
    <molecule id="Q6ZNR0-5"/>
    <property type="protein sequence ID" value="ENSP00000413192.2"/>
    <property type="gene ID" value="ENSG00000142046.15"/>
</dbReference>
<dbReference type="Ensembl" id="ENST00000436170.6">
    <molecule id="Q6ZNR0-4"/>
    <property type="protein sequence ID" value="ENSP00000407003.2"/>
    <property type="gene ID" value="ENSG00000142046.15"/>
</dbReference>
<dbReference type="Ensembl" id="ENST00000447302.6">
    <molecule id="Q6ZNR0-3"/>
    <property type="protein sequence ID" value="ENSP00000405647.2"/>
    <property type="gene ID" value="ENSG00000142046.15"/>
</dbReference>
<dbReference type="Ensembl" id="ENST00000544232.5">
    <molecule id="Q6ZNR0-5"/>
    <property type="protein sequence ID" value="ENSP00000437779.1"/>
    <property type="gene ID" value="ENSG00000142046.15"/>
</dbReference>
<dbReference type="GeneID" id="641649"/>
<dbReference type="KEGG" id="hsa:641649"/>
<dbReference type="MANE-Select" id="ENST00000392002.7">
    <property type="protein sequence ID" value="ENSP00000375859.1"/>
    <property type="RefSeq nucleotide sequence ID" value="NM_001098821.2"/>
    <property type="RefSeq protein sequence ID" value="NP_001092291.1"/>
</dbReference>
<dbReference type="UCSC" id="uc002oqk.5">
    <molecule id="Q6ZNR0-1"/>
    <property type="organism name" value="human"/>
</dbReference>
<dbReference type="AGR" id="HGNC:32393"/>
<dbReference type="CTD" id="641649"/>
<dbReference type="DisGeNET" id="641649"/>
<dbReference type="GeneCards" id="TMEM91"/>
<dbReference type="HGNC" id="HGNC:32393">
    <property type="gene designation" value="TMEM91"/>
</dbReference>
<dbReference type="HPA" id="ENSG00000142046">
    <property type="expression patterns" value="Tissue enhanced (brain)"/>
</dbReference>
<dbReference type="MalaCards" id="TMEM91"/>
<dbReference type="MIM" id="618294">
    <property type="type" value="gene"/>
</dbReference>
<dbReference type="neXtProt" id="NX_Q6ZNR0"/>
<dbReference type="OpenTargets" id="ENSG00000142046"/>
<dbReference type="PharmGKB" id="PA142670743"/>
<dbReference type="VEuPathDB" id="HostDB:ENSG00000142046"/>
<dbReference type="eggNOG" id="ENOG502TEEM">
    <property type="taxonomic scope" value="Eukaryota"/>
</dbReference>
<dbReference type="GeneTree" id="ENSGT00950000183147"/>
<dbReference type="HOGENOM" id="CLU_094250_1_0_1"/>
<dbReference type="InParanoid" id="Q6ZNR0"/>
<dbReference type="OMA" id="DWDGGGH"/>
<dbReference type="OrthoDB" id="10018862at2759"/>
<dbReference type="PAN-GO" id="Q6ZNR0">
    <property type="GO annotations" value="2 GO annotations based on evolutionary models"/>
</dbReference>
<dbReference type="PhylomeDB" id="Q6ZNR0"/>
<dbReference type="TreeFam" id="TF331357"/>
<dbReference type="PathwayCommons" id="Q6ZNR0"/>
<dbReference type="SignaLink" id="Q6ZNR0"/>
<dbReference type="BioGRID-ORCS" id="641649">
    <property type="hits" value="13 hits in 1158 CRISPR screens"/>
</dbReference>
<dbReference type="ChiTaRS" id="TMEM91">
    <property type="organism name" value="human"/>
</dbReference>
<dbReference type="GenomeRNAi" id="641649"/>
<dbReference type="Pharos" id="Q6ZNR0">
    <property type="development level" value="Tdark"/>
</dbReference>
<dbReference type="PRO" id="PR:Q6ZNR0"/>
<dbReference type="Proteomes" id="UP000005640">
    <property type="component" value="Chromosome 19"/>
</dbReference>
<dbReference type="RNAct" id="Q6ZNR0">
    <property type="molecule type" value="protein"/>
</dbReference>
<dbReference type="Bgee" id="ENSG00000142046">
    <property type="expression patterns" value="Expressed in nucleus accumbens and 171 other cell types or tissues"/>
</dbReference>
<dbReference type="ExpressionAtlas" id="Q6ZNR0">
    <property type="expression patterns" value="baseline and differential"/>
</dbReference>
<dbReference type="GO" id="GO:0043231">
    <property type="term" value="C:intracellular membrane-bounded organelle"/>
    <property type="evidence" value="ECO:0000318"/>
    <property type="project" value="GO_Central"/>
</dbReference>
<dbReference type="GO" id="GO:0016020">
    <property type="term" value="C:membrane"/>
    <property type="evidence" value="ECO:0000318"/>
    <property type="project" value="GO_Central"/>
</dbReference>
<dbReference type="GO" id="GO:0002244">
    <property type="term" value="P:hematopoietic progenitor cell differentiation"/>
    <property type="evidence" value="ECO:0007669"/>
    <property type="project" value="Ensembl"/>
</dbReference>
<dbReference type="InterPro" id="IPR007593">
    <property type="entry name" value="CD225/Dispanin_fam"/>
</dbReference>
<dbReference type="PANTHER" id="PTHR14768:SF2">
    <property type="entry name" value="TRANSMEMBRANE PROTEIN 91"/>
    <property type="match status" value="1"/>
</dbReference>
<dbReference type="PANTHER" id="PTHR14768">
    <property type="entry name" value="UPF0338 PROTEIN"/>
    <property type="match status" value="1"/>
</dbReference>
<dbReference type="Pfam" id="PF04505">
    <property type="entry name" value="CD225"/>
    <property type="match status" value="1"/>
</dbReference>